<protein>
    <recommendedName>
        <fullName evidence="5">Protein VdcD</fullName>
    </recommendedName>
    <alternativeName>
        <fullName evidence="3">Phenolic acid decarboxylase subunit D</fullName>
        <shortName evidence="3">PAD</shortName>
    </alternativeName>
</protein>
<dbReference type="EMBL" id="AF134589">
    <property type="protein sequence ID" value="AAD28783.1"/>
    <property type="molecule type" value="Genomic_DNA"/>
</dbReference>
<dbReference type="SMR" id="Q9X698"/>
<dbReference type="GO" id="GO:0009056">
    <property type="term" value="P:catabolic process"/>
    <property type="evidence" value="ECO:0007669"/>
    <property type="project" value="UniProtKB-KW"/>
</dbReference>
<dbReference type="GO" id="GO:0009636">
    <property type="term" value="P:response to toxic substance"/>
    <property type="evidence" value="ECO:0007669"/>
    <property type="project" value="UniProtKB-KW"/>
</dbReference>
<dbReference type="InterPro" id="IPR047707">
    <property type="entry name" value="VdcD-like"/>
</dbReference>
<dbReference type="NCBIfam" id="NF041205">
    <property type="entry name" value="VdcD"/>
    <property type="match status" value="1"/>
</dbReference>
<feature type="chain" id="PRO_0000444040" description="Protein VdcD">
    <location>
        <begin position="1"/>
        <end position="79"/>
    </location>
</feature>
<organism>
    <name type="scientific">Streptomyces sp. (strain D7)</name>
    <dbReference type="NCBI Taxonomy" id="92742"/>
    <lineage>
        <taxon>Bacteria</taxon>
        <taxon>Bacillati</taxon>
        <taxon>Actinomycetota</taxon>
        <taxon>Actinomycetes</taxon>
        <taxon>Kitasatosporales</taxon>
        <taxon>Streptomycetaceae</taxon>
        <taxon>Streptomyces</taxon>
    </lineage>
</organism>
<comment type="function">
    <text evidence="1 2">Involved in the non-oxidative decarboxylation and detoxification of phenolic derivatives under both aerobic and anaerobic conditions, however the precise biochemical function of VdcD in metabolism of phenolic acid is unknown.</text>
</comment>
<comment type="induction">
    <text evidence="1">By vanillate.</text>
</comment>
<comment type="miscellaneous">
    <text evidence="4">It is not known, if phenolic acid decarboxylase forms a complex composed of VdcB, VdcC and VdcD. The term subunit is often used in reference to the operon, however there is no experimental evidence to prove the existence of the complex.</text>
</comment>
<name>VDCD_STRD7</name>
<keyword id="KW-0058">Aromatic hydrocarbons catabolism</keyword>
<keyword id="KW-0216">Detoxification</keyword>
<accession>Q9X698</accession>
<evidence type="ECO:0000269" key="1">
    <source>
    </source>
</evidence>
<evidence type="ECO:0000269" key="2">
    <source>
    </source>
</evidence>
<evidence type="ECO:0000303" key="3">
    <source>
    </source>
</evidence>
<evidence type="ECO:0000305" key="4"/>
<evidence type="ECO:0000305" key="5">
    <source>
    </source>
</evidence>
<evidence type="ECO:0000312" key="6">
    <source>
        <dbReference type="EMBL" id="AAD28783.1"/>
    </source>
</evidence>
<reference key="1">
    <citation type="journal article" date="1999" name="Microbiology">
        <title>Characterization of a vanillic acid non-oxidative decarboxylation gene cluster from Streptomyces sp. D7.</title>
        <authorList>
            <person name="Chow K.T."/>
            <person name="Pope M.K."/>
            <person name="Davies J."/>
        </authorList>
    </citation>
    <scope>NUCLEOTIDE SEQUENCE [GENOMIC DNA]</scope>
    <scope>FUNCTION</scope>
    <scope>INDUCTION</scope>
    <source>
        <strain evidence="6">D7</strain>
    </source>
</reference>
<reference key="2">
    <citation type="journal article" date="2005" name="Genomics">
        <title>Distribution of genes encoding the microbial non-oxidative reversible hydroxyarylic acid decarboxylases/phenol carboxylases.</title>
        <authorList>
            <person name="Lupa B."/>
            <person name="Lyon D."/>
            <person name="Gibbs M.D."/>
            <person name="Reeves R.A."/>
            <person name="Wiegel J."/>
        </authorList>
    </citation>
    <scope>FUNCTION</scope>
    <source>
        <strain>D7</strain>
    </source>
</reference>
<sequence>MNHLPVECPRCAFEDISLLATSPVPGVWDVVQCGRCLYTWRTIEPARRTRRDAYPDSFKLTAEDIENAIEVPAVPPLLK</sequence>
<proteinExistence type="evidence at transcript level"/>
<gene>
    <name evidence="3" type="primary">vdcD</name>
</gene>